<keyword id="KW-0067">ATP-binding</keyword>
<keyword id="KW-0131">Cell cycle</keyword>
<keyword id="KW-0132">Cell division</keyword>
<keyword id="KW-0137">Centromere</keyword>
<keyword id="KW-0158">Chromosome</keyword>
<keyword id="KW-0238">DNA-binding</keyword>
<keyword id="KW-0347">Helicase</keyword>
<keyword id="KW-0378">Hydrolase</keyword>
<keyword id="KW-0995">Kinetochore</keyword>
<keyword id="KW-0498">Mitosis</keyword>
<keyword id="KW-0547">Nucleotide-binding</keyword>
<keyword id="KW-0597">Phosphoprotein</keyword>
<keyword id="KW-1185">Reference proteome</keyword>
<keyword id="KW-0677">Repeat</keyword>
<keyword id="KW-0802">TPR repeat</keyword>
<feature type="chain" id="PRO_0000328833" description="DNA excision repair protein ERCC-6-like">
    <location>
        <begin position="1"/>
        <end position="1451"/>
    </location>
</feature>
<feature type="repeat" description="TPR 1">
    <location>
        <begin position="27"/>
        <end position="60"/>
    </location>
</feature>
<feature type="domain" description="Helicase ATP-binding" evidence="2">
    <location>
        <begin position="118"/>
        <end position="286"/>
    </location>
</feature>
<feature type="domain" description="Helicase C-terminal" evidence="3">
    <location>
        <begin position="479"/>
        <end position="639"/>
    </location>
</feature>
<feature type="repeat" description="TPR 2">
    <location>
        <begin position="1402"/>
        <end position="1435"/>
    </location>
</feature>
<feature type="region of interest" description="Disordered" evidence="4">
    <location>
        <begin position="647"/>
        <end position="669"/>
    </location>
</feature>
<feature type="region of interest" description="Disordered" evidence="4">
    <location>
        <begin position="778"/>
        <end position="804"/>
    </location>
</feature>
<feature type="region of interest" description="Disordered" evidence="4">
    <location>
        <begin position="935"/>
        <end position="1006"/>
    </location>
</feature>
<feature type="region of interest" description="Disordered" evidence="4">
    <location>
        <begin position="1035"/>
        <end position="1054"/>
    </location>
</feature>
<feature type="region of interest" description="Disordered" evidence="4">
    <location>
        <begin position="1063"/>
        <end position="1083"/>
    </location>
</feature>
<feature type="region of interest" description="Disordered" evidence="4">
    <location>
        <begin position="1096"/>
        <end position="1140"/>
    </location>
</feature>
<feature type="region of interest" description="Disordered" evidence="4">
    <location>
        <begin position="1182"/>
        <end position="1343"/>
    </location>
</feature>
<feature type="short sequence motif" description="DEAH box">
    <location>
        <begin position="237"/>
        <end position="240"/>
    </location>
</feature>
<feature type="compositionally biased region" description="Acidic residues" evidence="4">
    <location>
        <begin position="781"/>
        <end position="804"/>
    </location>
</feature>
<feature type="compositionally biased region" description="Polar residues" evidence="4">
    <location>
        <begin position="944"/>
        <end position="964"/>
    </location>
</feature>
<feature type="compositionally biased region" description="Polar residues" evidence="4">
    <location>
        <begin position="992"/>
        <end position="1002"/>
    </location>
</feature>
<feature type="compositionally biased region" description="Acidic residues" evidence="4">
    <location>
        <begin position="1035"/>
        <end position="1050"/>
    </location>
</feature>
<feature type="compositionally biased region" description="Basic and acidic residues" evidence="4">
    <location>
        <begin position="1063"/>
        <end position="1074"/>
    </location>
</feature>
<feature type="compositionally biased region" description="Acidic residues" evidence="4">
    <location>
        <begin position="1121"/>
        <end position="1132"/>
    </location>
</feature>
<feature type="compositionally biased region" description="Polar residues" evidence="4">
    <location>
        <begin position="1213"/>
        <end position="1230"/>
    </location>
</feature>
<feature type="compositionally biased region" description="Basic and acidic residues" evidence="4">
    <location>
        <begin position="1244"/>
        <end position="1278"/>
    </location>
</feature>
<feature type="compositionally biased region" description="Acidic residues" evidence="4">
    <location>
        <begin position="1310"/>
        <end position="1341"/>
    </location>
</feature>
<feature type="binding site" evidence="2">
    <location>
        <begin position="131"/>
        <end position="138"/>
    </location>
    <ligand>
        <name>ATP</name>
        <dbReference type="ChEBI" id="CHEBI:30616"/>
    </ligand>
</feature>
<feature type="modified residue" description="Phosphoserine" evidence="5">
    <location>
        <position position="961"/>
    </location>
</feature>
<feature type="sequence conflict" description="In Ref. 2; AAI50169." evidence="6" ref="2">
    <original>R</original>
    <variation>H</variation>
    <location>
        <position position="45"/>
    </location>
</feature>
<feature type="sequence conflict" description="In Ref. 2; AAI50169." evidence="6" ref="2">
    <original>T</original>
    <variation>A</variation>
    <location>
        <position position="157"/>
    </location>
</feature>
<evidence type="ECO:0000250" key="1">
    <source>
        <dbReference type="UniProtKB" id="Q2NKX8"/>
    </source>
</evidence>
<evidence type="ECO:0000255" key="2">
    <source>
        <dbReference type="PROSITE-ProRule" id="PRU00541"/>
    </source>
</evidence>
<evidence type="ECO:0000255" key="3">
    <source>
        <dbReference type="PROSITE-ProRule" id="PRU00542"/>
    </source>
</evidence>
<evidence type="ECO:0000256" key="4">
    <source>
        <dbReference type="SAM" id="MobiDB-lite"/>
    </source>
</evidence>
<evidence type="ECO:0000269" key="5">
    <source>
    </source>
</evidence>
<evidence type="ECO:0000305" key="6"/>
<accession>A2BGR3</accession>
<accession>A7E225</accession>
<name>ERC6L_DANRE</name>
<gene>
    <name type="primary">ercc6l</name>
    <name type="ORF">si:ch211-278b8.3</name>
</gene>
<sequence length="1451" mass="163227">MESNNVEEVTDKFGGCLSLDTEKMGKYDRYRQKGKEAALNGELPRALELFQLAYQLQPSEKLKKRIQAIQDLIQREDEEDEEEEEEFVNVNNSGLKLYKGLYDKLYDHQKEGVAFLYSLYRDGRKGGILADDMGLGKTIQVISFLSGMYDAELANHTLLVMPTSLIKNWVREFAKWTPGMRVKEFHGSSKTERNRNLERIQRKGGVIITTYQMLINNYEQLGSNGHREFKWDYVILDEAHKIKTSSTKTAKSAHAIPAKNRVLLTGTPVQNNLREMWALFDFACQGSLLGTSKTFKTEYENPITRAREKDATPGEKALGLRISQNLTDIIKPYFLRRTKADVQQKKLKLEEGFEEEEDQENKCPNAREGVEMPSLTRKNDLIVWTYLSSVQEDIYNKFISLDQIKELLTTTRSPLAELTVLKKLCDHPRLLSQRAVIQLGLERGSDSELVHSDESESAVSQIDNISDHTLIEESGKLQFVVSLMECLREEGHRTLIFSQSRKMLDIMERVLRNRNFRLLRLDGTVTQLAEREKRISLFQTDKRYTIFLLTTQVGGVGITLTGANRVVIFDPSWNPATDAQAVDRAYRIGQTENVIIYRLITCGTVEEKIYRRQVFKDSLIRQTTGDKKNPFRYFSKQELRELFKLEDTRSSSTQQQLQAMHAQSRRSDTSLDHHIARLHSMEMFGISDHDLMFTKEPAADEDDPEDAESHHYIQTRVQKAQELMQAESELHGQLLDSMAQNTEPAWLRQMGQPNSSIRDRPAPPRIKNEPVTVDLTHNSFDEPEFEEDEQNLPSAEDAEMETASEDVEVIGDEDLGDKVISSEVEVVGEEVEVVAEEVEDAGEVEVVSEEVEGVGVEVEDVGVEVEDAGVEVEDAGVEVEDAGVEVEDAGEVEVVSGEGQVQPKSPQSGGEWNLQIVKTEVSPIAEKFADVITLDDTSDEADSSDFNTESKQQNSSQRFQSPSLQFPKLDDLSGASNTLGNEEVEPEKCHSQVLSSPLSQHEATTDEPFKAEMEMPHGNFNLLLEDSADMYFPEDEEVHEVEESAAEESPEFQLQMDVSGERLEEPSINHDKQNNGEFVNYNDSEVSKRESLLKIRSTPNESVDDSFVHSVRTKKRQVISDTEEEEEEEEESEKPCLTSSPFIDAISRLGSSTPKAVLVDGARLRRSLNASVASRRSFVVSLLENESDEESNEDKTKSSGASETCADELVEEVQTSSGDNSKSYETSEANGTLADELVEEEGEYREGKNTSDKVSESNETHSEEFAEEEKPSGDKSESYEISEASETHTDNSEEEIIGDHTGSYKISESSEADESVVEEEEPSGETLNTEESEMGEEEESAELIAGQEQEEWHSAVLESTGDVELDSNETMDQCAPKTVPVETHVLPVSSTNTAAEASDNKYNLLVLSGKQSLAEGRKQEALDFFLKAIDINTGDPEIQLLIIQLYRQLSQ</sequence>
<reference key="1">
    <citation type="journal article" date="2013" name="Nature">
        <title>The zebrafish reference genome sequence and its relationship to the human genome.</title>
        <authorList>
            <person name="Howe K."/>
            <person name="Clark M.D."/>
            <person name="Torroja C.F."/>
            <person name="Torrance J."/>
            <person name="Berthelot C."/>
            <person name="Muffato M."/>
            <person name="Collins J.E."/>
            <person name="Humphray S."/>
            <person name="McLaren K."/>
            <person name="Matthews L."/>
            <person name="McLaren S."/>
            <person name="Sealy I."/>
            <person name="Caccamo M."/>
            <person name="Churcher C."/>
            <person name="Scott C."/>
            <person name="Barrett J.C."/>
            <person name="Koch R."/>
            <person name="Rauch G.J."/>
            <person name="White S."/>
            <person name="Chow W."/>
            <person name="Kilian B."/>
            <person name="Quintais L.T."/>
            <person name="Guerra-Assuncao J.A."/>
            <person name="Zhou Y."/>
            <person name="Gu Y."/>
            <person name="Yen J."/>
            <person name="Vogel J.H."/>
            <person name="Eyre T."/>
            <person name="Redmond S."/>
            <person name="Banerjee R."/>
            <person name="Chi J."/>
            <person name="Fu B."/>
            <person name="Langley E."/>
            <person name="Maguire S.F."/>
            <person name="Laird G.K."/>
            <person name="Lloyd D."/>
            <person name="Kenyon E."/>
            <person name="Donaldson S."/>
            <person name="Sehra H."/>
            <person name="Almeida-King J."/>
            <person name="Loveland J."/>
            <person name="Trevanion S."/>
            <person name="Jones M."/>
            <person name="Quail M."/>
            <person name="Willey D."/>
            <person name="Hunt A."/>
            <person name="Burton J."/>
            <person name="Sims S."/>
            <person name="McLay K."/>
            <person name="Plumb B."/>
            <person name="Davis J."/>
            <person name="Clee C."/>
            <person name="Oliver K."/>
            <person name="Clark R."/>
            <person name="Riddle C."/>
            <person name="Elliot D."/>
            <person name="Threadgold G."/>
            <person name="Harden G."/>
            <person name="Ware D."/>
            <person name="Begum S."/>
            <person name="Mortimore B."/>
            <person name="Kerry G."/>
            <person name="Heath P."/>
            <person name="Phillimore B."/>
            <person name="Tracey A."/>
            <person name="Corby N."/>
            <person name="Dunn M."/>
            <person name="Johnson C."/>
            <person name="Wood J."/>
            <person name="Clark S."/>
            <person name="Pelan S."/>
            <person name="Griffiths G."/>
            <person name="Smith M."/>
            <person name="Glithero R."/>
            <person name="Howden P."/>
            <person name="Barker N."/>
            <person name="Lloyd C."/>
            <person name="Stevens C."/>
            <person name="Harley J."/>
            <person name="Holt K."/>
            <person name="Panagiotidis G."/>
            <person name="Lovell J."/>
            <person name="Beasley H."/>
            <person name="Henderson C."/>
            <person name="Gordon D."/>
            <person name="Auger K."/>
            <person name="Wright D."/>
            <person name="Collins J."/>
            <person name="Raisen C."/>
            <person name="Dyer L."/>
            <person name="Leung K."/>
            <person name="Robertson L."/>
            <person name="Ambridge K."/>
            <person name="Leongamornlert D."/>
            <person name="McGuire S."/>
            <person name="Gilderthorp R."/>
            <person name="Griffiths C."/>
            <person name="Manthravadi D."/>
            <person name="Nichol S."/>
            <person name="Barker G."/>
            <person name="Whitehead S."/>
            <person name="Kay M."/>
            <person name="Brown J."/>
            <person name="Murnane C."/>
            <person name="Gray E."/>
            <person name="Humphries M."/>
            <person name="Sycamore N."/>
            <person name="Barker D."/>
            <person name="Saunders D."/>
            <person name="Wallis J."/>
            <person name="Babbage A."/>
            <person name="Hammond S."/>
            <person name="Mashreghi-Mohammadi M."/>
            <person name="Barr L."/>
            <person name="Martin S."/>
            <person name="Wray P."/>
            <person name="Ellington A."/>
            <person name="Matthews N."/>
            <person name="Ellwood M."/>
            <person name="Woodmansey R."/>
            <person name="Clark G."/>
            <person name="Cooper J."/>
            <person name="Tromans A."/>
            <person name="Grafham D."/>
            <person name="Skuce C."/>
            <person name="Pandian R."/>
            <person name="Andrews R."/>
            <person name="Harrison E."/>
            <person name="Kimberley A."/>
            <person name="Garnett J."/>
            <person name="Fosker N."/>
            <person name="Hall R."/>
            <person name="Garner P."/>
            <person name="Kelly D."/>
            <person name="Bird C."/>
            <person name="Palmer S."/>
            <person name="Gehring I."/>
            <person name="Berger A."/>
            <person name="Dooley C.M."/>
            <person name="Ersan-Urun Z."/>
            <person name="Eser C."/>
            <person name="Geiger H."/>
            <person name="Geisler M."/>
            <person name="Karotki L."/>
            <person name="Kirn A."/>
            <person name="Konantz J."/>
            <person name="Konantz M."/>
            <person name="Oberlander M."/>
            <person name="Rudolph-Geiger S."/>
            <person name="Teucke M."/>
            <person name="Lanz C."/>
            <person name="Raddatz G."/>
            <person name="Osoegawa K."/>
            <person name="Zhu B."/>
            <person name="Rapp A."/>
            <person name="Widaa S."/>
            <person name="Langford C."/>
            <person name="Yang F."/>
            <person name="Schuster S.C."/>
            <person name="Carter N.P."/>
            <person name="Harrow J."/>
            <person name="Ning Z."/>
            <person name="Herrero J."/>
            <person name="Searle S.M."/>
            <person name="Enright A."/>
            <person name="Geisler R."/>
            <person name="Plasterk R.H."/>
            <person name="Lee C."/>
            <person name="Westerfield M."/>
            <person name="de Jong P.J."/>
            <person name="Zon L.I."/>
            <person name="Postlethwait J.H."/>
            <person name="Nusslein-Volhard C."/>
            <person name="Hubbard T.J."/>
            <person name="Roest Crollius H."/>
            <person name="Rogers J."/>
            <person name="Stemple D.L."/>
        </authorList>
    </citation>
    <scope>NUCLEOTIDE SEQUENCE [LARGE SCALE GENOMIC DNA]</scope>
    <source>
        <strain>Tuebingen</strain>
    </source>
</reference>
<reference key="2">
    <citation type="submission" date="2007-07" db="EMBL/GenBank/DDBJ databases">
        <authorList>
            <consortium name="NIH - Zebrafish Gene Collection (ZGC) project"/>
        </authorList>
    </citation>
    <scope>NUCLEOTIDE SEQUENCE [LARGE SCALE MRNA] OF 1-579</scope>
    <source>
        <tissue>Embryo</tissue>
    </source>
</reference>
<reference key="3">
    <citation type="journal article" date="2008" name="J. Proteome Res.">
        <title>Online automated in vivo zebrafish phosphoproteomics: from large-scale analysis down to a single embryo.</title>
        <authorList>
            <person name="Lemeer S."/>
            <person name="Pinkse M.W.H."/>
            <person name="Mohammed S."/>
            <person name="van Breukelen B."/>
            <person name="den Hertog J."/>
            <person name="Slijper M."/>
            <person name="Heck A.J.R."/>
        </authorList>
    </citation>
    <scope>PHOSPHORYLATION [LARGE SCALE ANALYSIS] AT SER-961</scope>
    <scope>IDENTIFICATION BY MASS SPECTROMETRY</scope>
    <source>
        <tissue>Embryo</tissue>
    </source>
</reference>
<proteinExistence type="evidence at protein level"/>
<dbReference type="EC" id="3.6.4.12" evidence="1"/>
<dbReference type="EMBL" id="CR391924">
    <property type="protein sequence ID" value="CAM13192.1"/>
    <property type="molecule type" value="Genomic_DNA"/>
</dbReference>
<dbReference type="EMBL" id="BX510925">
    <property type="protein sequence ID" value="CAM13192.1"/>
    <property type="status" value="JOINED"/>
    <property type="molecule type" value="Genomic_DNA"/>
</dbReference>
<dbReference type="EMBL" id="BX510925">
    <property type="protein sequence ID" value="CAM14199.1"/>
    <property type="molecule type" value="Genomic_DNA"/>
</dbReference>
<dbReference type="EMBL" id="CR391924">
    <property type="protein sequence ID" value="CAM14199.1"/>
    <property type="status" value="JOINED"/>
    <property type="molecule type" value="Genomic_DNA"/>
</dbReference>
<dbReference type="EMBL" id="BC150168">
    <property type="protein sequence ID" value="AAI50169.1"/>
    <property type="molecule type" value="mRNA"/>
</dbReference>
<dbReference type="RefSeq" id="NP_001093563.1">
    <property type="nucleotide sequence ID" value="NM_001100093.2"/>
</dbReference>
<dbReference type="RefSeq" id="XP_009299551.1">
    <property type="nucleotide sequence ID" value="XM_009301276.2"/>
</dbReference>
<dbReference type="SMR" id="A2BGR3"/>
<dbReference type="FunCoup" id="A2BGR3">
    <property type="interactions" value="1140"/>
</dbReference>
<dbReference type="STRING" id="7955.ENSDARP00000012447"/>
<dbReference type="iPTMnet" id="A2BGR3"/>
<dbReference type="PaxDb" id="7955-ENSDARP00000012447"/>
<dbReference type="PeptideAtlas" id="A2BGR3"/>
<dbReference type="Ensembl" id="ENSDART00000015401">
    <property type="protein sequence ID" value="ENSDARP00000012447"/>
    <property type="gene ID" value="ENSDARG00000002479"/>
</dbReference>
<dbReference type="GeneID" id="100005291"/>
<dbReference type="KEGG" id="dre:100005291"/>
<dbReference type="AGR" id="ZFIN:ZDB-GENE-060531-56"/>
<dbReference type="CTD" id="54821"/>
<dbReference type="ZFIN" id="ZDB-GENE-060531-56">
    <property type="gene designation" value="ercc6l"/>
</dbReference>
<dbReference type="eggNOG" id="KOG0387">
    <property type="taxonomic scope" value="Eukaryota"/>
</dbReference>
<dbReference type="HOGENOM" id="CLU_004666_0_0_1"/>
<dbReference type="InParanoid" id="A2BGR3"/>
<dbReference type="OMA" id="YHRFIQD"/>
<dbReference type="OrthoDB" id="413460at2759"/>
<dbReference type="PhylomeDB" id="A2BGR3"/>
<dbReference type="TreeFam" id="TF332843"/>
<dbReference type="PRO" id="PR:A2BGR3"/>
<dbReference type="Proteomes" id="UP000000437">
    <property type="component" value="Chromosome 5"/>
</dbReference>
<dbReference type="Bgee" id="ENSDARG00000002479">
    <property type="expression patterns" value="Expressed in blastula and 28 other cell types or tissues"/>
</dbReference>
<dbReference type="GO" id="GO:0000776">
    <property type="term" value="C:kinetochore"/>
    <property type="evidence" value="ECO:0007669"/>
    <property type="project" value="UniProtKB-KW"/>
</dbReference>
<dbReference type="GO" id="GO:0005524">
    <property type="term" value="F:ATP binding"/>
    <property type="evidence" value="ECO:0007669"/>
    <property type="project" value="UniProtKB-KW"/>
</dbReference>
<dbReference type="GO" id="GO:0016887">
    <property type="term" value="F:ATP hydrolysis activity"/>
    <property type="evidence" value="ECO:0007669"/>
    <property type="project" value="RHEA"/>
</dbReference>
<dbReference type="GO" id="GO:0003677">
    <property type="term" value="F:DNA binding"/>
    <property type="evidence" value="ECO:0007669"/>
    <property type="project" value="UniProtKB-KW"/>
</dbReference>
<dbReference type="GO" id="GO:0015616">
    <property type="term" value="F:DNA translocase activity"/>
    <property type="evidence" value="ECO:0000318"/>
    <property type="project" value="GO_Central"/>
</dbReference>
<dbReference type="GO" id="GO:0004386">
    <property type="term" value="F:helicase activity"/>
    <property type="evidence" value="ECO:0007669"/>
    <property type="project" value="UniProtKB-KW"/>
</dbReference>
<dbReference type="GO" id="GO:0051301">
    <property type="term" value="P:cell division"/>
    <property type="evidence" value="ECO:0007669"/>
    <property type="project" value="UniProtKB-KW"/>
</dbReference>
<dbReference type="GO" id="GO:0006281">
    <property type="term" value="P:DNA repair"/>
    <property type="evidence" value="ECO:0000318"/>
    <property type="project" value="GO_Central"/>
</dbReference>
<dbReference type="GO" id="GO:0016539">
    <property type="term" value="P:intein-mediated protein splicing"/>
    <property type="evidence" value="ECO:0007669"/>
    <property type="project" value="InterPro"/>
</dbReference>
<dbReference type="CDD" id="cd18001">
    <property type="entry name" value="DEXHc_ERCC6L"/>
    <property type="match status" value="1"/>
</dbReference>
<dbReference type="CDD" id="cd18793">
    <property type="entry name" value="SF2_C_SNF"/>
    <property type="match status" value="1"/>
</dbReference>
<dbReference type="FunFam" id="3.40.50.10810:FF:000029">
    <property type="entry name" value="ERCC excision repair 6-like, spindle assembly checkpoint helicase"/>
    <property type="match status" value="1"/>
</dbReference>
<dbReference type="Gene3D" id="3.40.50.300">
    <property type="entry name" value="P-loop containing nucleotide triphosphate hydrolases"/>
    <property type="match status" value="1"/>
</dbReference>
<dbReference type="Gene3D" id="3.40.50.10810">
    <property type="entry name" value="Tandem AAA-ATPase domain"/>
    <property type="match status" value="1"/>
</dbReference>
<dbReference type="InterPro" id="IPR014001">
    <property type="entry name" value="Helicase_ATP-bd"/>
</dbReference>
<dbReference type="InterPro" id="IPR001650">
    <property type="entry name" value="Helicase_C-like"/>
</dbReference>
<dbReference type="InterPro" id="IPR006141">
    <property type="entry name" value="Intein_N"/>
</dbReference>
<dbReference type="InterPro" id="IPR027417">
    <property type="entry name" value="P-loop_NTPase"/>
</dbReference>
<dbReference type="InterPro" id="IPR038718">
    <property type="entry name" value="SNF2-like_sf"/>
</dbReference>
<dbReference type="InterPro" id="IPR049730">
    <property type="entry name" value="SNF2/RAD54-like_C"/>
</dbReference>
<dbReference type="InterPro" id="IPR000330">
    <property type="entry name" value="SNF2_N"/>
</dbReference>
<dbReference type="InterPro" id="IPR050496">
    <property type="entry name" value="SNF2_RAD54_helicase_repair"/>
</dbReference>
<dbReference type="InterPro" id="IPR019734">
    <property type="entry name" value="TPR_rpt"/>
</dbReference>
<dbReference type="PANTHER" id="PTHR45629:SF7">
    <property type="entry name" value="DNA EXCISION REPAIR PROTEIN ERCC-6-RELATED"/>
    <property type="match status" value="1"/>
</dbReference>
<dbReference type="PANTHER" id="PTHR45629">
    <property type="entry name" value="SNF2/RAD54 FAMILY MEMBER"/>
    <property type="match status" value="1"/>
</dbReference>
<dbReference type="Pfam" id="PF00271">
    <property type="entry name" value="Helicase_C"/>
    <property type="match status" value="1"/>
</dbReference>
<dbReference type="Pfam" id="PF00176">
    <property type="entry name" value="SNF2-rel_dom"/>
    <property type="match status" value="1"/>
</dbReference>
<dbReference type="SMART" id="SM00487">
    <property type="entry name" value="DEXDc"/>
    <property type="match status" value="1"/>
</dbReference>
<dbReference type="SMART" id="SM00490">
    <property type="entry name" value="HELICc"/>
    <property type="match status" value="1"/>
</dbReference>
<dbReference type="SUPFAM" id="SSF52540">
    <property type="entry name" value="P-loop containing nucleoside triphosphate hydrolases"/>
    <property type="match status" value="2"/>
</dbReference>
<dbReference type="PROSITE" id="PS51192">
    <property type="entry name" value="HELICASE_ATP_BIND_1"/>
    <property type="match status" value="1"/>
</dbReference>
<dbReference type="PROSITE" id="PS51194">
    <property type="entry name" value="HELICASE_CTER"/>
    <property type="match status" value="1"/>
</dbReference>
<dbReference type="PROSITE" id="PS50005">
    <property type="entry name" value="TPR"/>
    <property type="match status" value="2"/>
</dbReference>
<comment type="function">
    <text evidence="1">DNA helicase that acts as a tension sensor that associates with catenated DNA which is stretched under tension until it is resolved during anaphase. Functions as ATP-dependent DNA translocase. Can promote Holliday junction branch migration (in vitro).</text>
</comment>
<comment type="catalytic activity">
    <reaction evidence="1">
        <text>ATP + H2O = ADP + phosphate + H(+)</text>
        <dbReference type="Rhea" id="RHEA:13065"/>
        <dbReference type="ChEBI" id="CHEBI:15377"/>
        <dbReference type="ChEBI" id="CHEBI:15378"/>
        <dbReference type="ChEBI" id="CHEBI:30616"/>
        <dbReference type="ChEBI" id="CHEBI:43474"/>
        <dbReference type="ChEBI" id="CHEBI:456216"/>
        <dbReference type="EC" id="3.6.4.12"/>
    </reaction>
</comment>
<comment type="subcellular location">
    <subcellularLocation>
        <location evidence="1">Chromosome</location>
        <location evidence="1">Centromere</location>
    </subcellularLocation>
    <subcellularLocation>
        <location evidence="1">Chromosome</location>
        <location evidence="1">Centromere</location>
        <location evidence="1">Kinetochore</location>
    </subcellularLocation>
    <subcellularLocation>
        <location evidence="1">Chromosome</location>
    </subcellularLocation>
    <text evidence="1">Localizes to kinetochores, inner centromeres and thin threads connecting separating chromosomes even during anaphase.</text>
</comment>
<comment type="similarity">
    <text evidence="6">Belongs to the SNF2/RAD54 helicase family.</text>
</comment>
<organism>
    <name type="scientific">Danio rerio</name>
    <name type="common">Zebrafish</name>
    <name type="synonym">Brachydanio rerio</name>
    <dbReference type="NCBI Taxonomy" id="7955"/>
    <lineage>
        <taxon>Eukaryota</taxon>
        <taxon>Metazoa</taxon>
        <taxon>Chordata</taxon>
        <taxon>Craniata</taxon>
        <taxon>Vertebrata</taxon>
        <taxon>Euteleostomi</taxon>
        <taxon>Actinopterygii</taxon>
        <taxon>Neopterygii</taxon>
        <taxon>Teleostei</taxon>
        <taxon>Ostariophysi</taxon>
        <taxon>Cypriniformes</taxon>
        <taxon>Danionidae</taxon>
        <taxon>Danioninae</taxon>
        <taxon>Danio</taxon>
    </lineage>
</organism>
<protein>
    <recommendedName>
        <fullName>DNA excision repair protein ERCC-6-like</fullName>
        <ecNumber evidence="1">3.6.4.12</ecNumber>
    </recommendedName>
    <alternativeName>
        <fullName>ATP-dependent helicase ERCC6-like</fullName>
    </alternativeName>
</protein>